<accession>Q2A580</accession>
<name>TOLB_FRATH</name>
<dbReference type="EMBL" id="AM233362">
    <property type="protein sequence ID" value="CAJ78774.1"/>
    <property type="molecule type" value="Genomic_DNA"/>
</dbReference>
<dbReference type="RefSeq" id="WP_004336796.1">
    <property type="nucleotide sequence ID" value="NZ_CP009694.1"/>
</dbReference>
<dbReference type="SMR" id="Q2A580"/>
<dbReference type="KEGG" id="ftl:FTL_0334"/>
<dbReference type="Proteomes" id="UP000001944">
    <property type="component" value="Chromosome"/>
</dbReference>
<dbReference type="GO" id="GO:0042597">
    <property type="term" value="C:periplasmic space"/>
    <property type="evidence" value="ECO:0007669"/>
    <property type="project" value="UniProtKB-SubCell"/>
</dbReference>
<dbReference type="GO" id="GO:0051301">
    <property type="term" value="P:cell division"/>
    <property type="evidence" value="ECO:0007669"/>
    <property type="project" value="UniProtKB-UniRule"/>
</dbReference>
<dbReference type="GO" id="GO:0017038">
    <property type="term" value="P:protein import"/>
    <property type="evidence" value="ECO:0007669"/>
    <property type="project" value="InterPro"/>
</dbReference>
<dbReference type="Gene3D" id="2.120.10.30">
    <property type="entry name" value="TolB, C-terminal domain"/>
    <property type="match status" value="1"/>
</dbReference>
<dbReference type="Gene3D" id="3.40.50.10070">
    <property type="entry name" value="TolB, N-terminal domain"/>
    <property type="match status" value="1"/>
</dbReference>
<dbReference type="HAMAP" id="MF_00671">
    <property type="entry name" value="TolB"/>
    <property type="match status" value="1"/>
</dbReference>
<dbReference type="InterPro" id="IPR011042">
    <property type="entry name" value="6-blade_b-propeller_TolB-like"/>
</dbReference>
<dbReference type="InterPro" id="IPR011659">
    <property type="entry name" value="PD40"/>
</dbReference>
<dbReference type="InterPro" id="IPR014167">
    <property type="entry name" value="Tol-Pal_TolB"/>
</dbReference>
<dbReference type="PANTHER" id="PTHR36842:SF1">
    <property type="entry name" value="PROTEIN TOLB"/>
    <property type="match status" value="1"/>
</dbReference>
<dbReference type="PANTHER" id="PTHR36842">
    <property type="entry name" value="PROTEIN TOLB HOMOLOG"/>
    <property type="match status" value="1"/>
</dbReference>
<dbReference type="Pfam" id="PF07676">
    <property type="entry name" value="PD40"/>
    <property type="match status" value="3"/>
</dbReference>
<dbReference type="SUPFAM" id="SSF52964">
    <property type="entry name" value="TolB, N-terminal domain"/>
    <property type="match status" value="1"/>
</dbReference>
<dbReference type="SUPFAM" id="SSF69304">
    <property type="entry name" value="Tricorn protease N-terminal domain"/>
    <property type="match status" value="1"/>
</dbReference>
<gene>
    <name evidence="1" type="primary">tolB</name>
    <name type="ordered locus">FTL_0334</name>
</gene>
<evidence type="ECO:0000255" key="1">
    <source>
        <dbReference type="HAMAP-Rule" id="MF_00671"/>
    </source>
</evidence>
<sequence>MRKIIAGVFIFVFLISNLYADLVAEVTTGVIQKPLVTVVSDNVVDQFPQQVNSVMVADLNHNAKLQANDTIKYEIKQKQNIPWKSLKSDYVVLTKYTNNSYNNYTVEVQILKRNDTSYLQAITYKNINVSLMRTLAHKISNYVYQKLTGNQGFFLTKLAYVKVSNLYARYGRLYELIISDYDGYNKHVVLRQTDNPIATPSWSNDGRYIVYSSYSGGSMGVYTLEIATGKVTRITNYKGINSSPSFSPDGKEIALALSKGYSDQTNIYIMNLATKALKRITINGINTAPKFSPNGQSIVFTSDREGRPNIYVASVNSKYPQSSILSTKIHQAYEPNYTPDGKNIVFMNQSSRTSGTQIADFNLVNGSVTNITNGKADSSPTVSPYGDMVAYISTNTRGYSSLDMVSLDGDNHFNIETADNGNILIQSPSWSPKNF</sequence>
<keyword id="KW-0131">Cell cycle</keyword>
<keyword id="KW-0132">Cell division</keyword>
<keyword id="KW-0574">Periplasm</keyword>
<keyword id="KW-1185">Reference proteome</keyword>
<keyword id="KW-0732">Signal</keyword>
<comment type="function">
    <text evidence="1">Part of the Tol-Pal system, which plays a role in outer membrane invagination during cell division and is important for maintaining outer membrane integrity.</text>
</comment>
<comment type="subunit">
    <text evidence="1">The Tol-Pal system is composed of five core proteins: the inner membrane proteins TolA, TolQ and TolR, the periplasmic protein TolB and the outer membrane protein Pal. They form a network linking the inner and outer membranes and the peptidoglycan layer.</text>
</comment>
<comment type="subcellular location">
    <subcellularLocation>
        <location evidence="1">Periplasm</location>
    </subcellularLocation>
</comment>
<comment type="similarity">
    <text evidence="1">Belongs to the TolB family.</text>
</comment>
<proteinExistence type="inferred from homology"/>
<protein>
    <recommendedName>
        <fullName evidence="1">Tol-Pal system protein TolB</fullName>
    </recommendedName>
</protein>
<reference key="1">
    <citation type="submission" date="2006-03" db="EMBL/GenBank/DDBJ databases">
        <title>Complete genome sequence of Francisella tularensis LVS (Live Vaccine Strain).</title>
        <authorList>
            <person name="Chain P."/>
            <person name="Larimer F."/>
            <person name="Land M."/>
            <person name="Stilwagen S."/>
            <person name="Larsson P."/>
            <person name="Bearden S."/>
            <person name="Chu M."/>
            <person name="Oyston P."/>
            <person name="Forsman M."/>
            <person name="Andersson S."/>
            <person name="Lindler L."/>
            <person name="Titball R."/>
            <person name="Garcia E."/>
        </authorList>
    </citation>
    <scope>NUCLEOTIDE SEQUENCE [LARGE SCALE GENOMIC DNA]</scope>
    <source>
        <strain>LVS</strain>
    </source>
</reference>
<feature type="signal peptide" evidence="1">
    <location>
        <begin position="1"/>
        <end position="20"/>
    </location>
</feature>
<feature type="chain" id="PRO_0000259048" description="Tol-Pal system protein TolB" evidence="1">
    <location>
        <begin position="21"/>
        <end position="435"/>
    </location>
</feature>
<organism>
    <name type="scientific">Francisella tularensis subsp. holarctica (strain LVS)</name>
    <dbReference type="NCBI Taxonomy" id="376619"/>
    <lineage>
        <taxon>Bacteria</taxon>
        <taxon>Pseudomonadati</taxon>
        <taxon>Pseudomonadota</taxon>
        <taxon>Gammaproteobacteria</taxon>
        <taxon>Thiotrichales</taxon>
        <taxon>Francisellaceae</taxon>
        <taxon>Francisella</taxon>
    </lineage>
</organism>